<feature type="chain" id="PRO_1000065763" description="N-succinylglutamate 5-semialdehyde dehydrogenase">
    <location>
        <begin position="1"/>
        <end position="490"/>
    </location>
</feature>
<feature type="active site" evidence="1">
    <location>
        <position position="246"/>
    </location>
</feature>
<feature type="active site" evidence="1">
    <location>
        <position position="280"/>
    </location>
</feature>
<feature type="binding site" evidence="1">
    <location>
        <begin position="223"/>
        <end position="228"/>
    </location>
    <ligand>
        <name>NAD(+)</name>
        <dbReference type="ChEBI" id="CHEBI:57540"/>
    </ligand>
</feature>
<gene>
    <name evidence="1" type="primary">astD</name>
    <name type="ordered locus">Spro_2842</name>
</gene>
<reference key="1">
    <citation type="submission" date="2007-09" db="EMBL/GenBank/DDBJ databases">
        <title>Complete sequence of chromosome of Serratia proteamaculans 568.</title>
        <authorList>
            <consortium name="US DOE Joint Genome Institute"/>
            <person name="Copeland A."/>
            <person name="Lucas S."/>
            <person name="Lapidus A."/>
            <person name="Barry K."/>
            <person name="Glavina del Rio T."/>
            <person name="Dalin E."/>
            <person name="Tice H."/>
            <person name="Pitluck S."/>
            <person name="Chain P."/>
            <person name="Malfatti S."/>
            <person name="Shin M."/>
            <person name="Vergez L."/>
            <person name="Schmutz J."/>
            <person name="Larimer F."/>
            <person name="Land M."/>
            <person name="Hauser L."/>
            <person name="Kyrpides N."/>
            <person name="Kim E."/>
            <person name="Taghavi S."/>
            <person name="Newman L."/>
            <person name="Vangronsveld J."/>
            <person name="van der Lelie D."/>
            <person name="Richardson P."/>
        </authorList>
    </citation>
    <scope>NUCLEOTIDE SEQUENCE [LARGE SCALE GENOMIC DNA]</scope>
    <source>
        <strain>568</strain>
    </source>
</reference>
<organism>
    <name type="scientific">Serratia proteamaculans (strain 568)</name>
    <dbReference type="NCBI Taxonomy" id="399741"/>
    <lineage>
        <taxon>Bacteria</taxon>
        <taxon>Pseudomonadati</taxon>
        <taxon>Pseudomonadota</taxon>
        <taxon>Gammaproteobacteria</taxon>
        <taxon>Enterobacterales</taxon>
        <taxon>Yersiniaceae</taxon>
        <taxon>Serratia</taxon>
    </lineage>
</organism>
<dbReference type="EC" id="1.2.1.71" evidence="1"/>
<dbReference type="EMBL" id="CP000826">
    <property type="protein sequence ID" value="ABV41943.1"/>
    <property type="molecule type" value="Genomic_DNA"/>
</dbReference>
<dbReference type="SMR" id="A8GFQ3"/>
<dbReference type="STRING" id="399741.Spro_2842"/>
<dbReference type="KEGG" id="spe:Spro_2842"/>
<dbReference type="eggNOG" id="COG1012">
    <property type="taxonomic scope" value="Bacteria"/>
</dbReference>
<dbReference type="HOGENOM" id="CLU_005391_1_0_6"/>
<dbReference type="OrthoDB" id="9812625at2"/>
<dbReference type="UniPathway" id="UPA00185">
    <property type="reaction ID" value="UER00282"/>
</dbReference>
<dbReference type="GO" id="GO:0043824">
    <property type="term" value="F:succinylglutamate-semialdehyde dehydrogenase activity"/>
    <property type="evidence" value="ECO:0007669"/>
    <property type="project" value="UniProtKB-EC"/>
</dbReference>
<dbReference type="GO" id="GO:0019544">
    <property type="term" value="P:arginine catabolic process to glutamate"/>
    <property type="evidence" value="ECO:0007669"/>
    <property type="project" value="UniProtKB-UniRule"/>
</dbReference>
<dbReference type="GO" id="GO:0019545">
    <property type="term" value="P:arginine catabolic process to succinate"/>
    <property type="evidence" value="ECO:0007669"/>
    <property type="project" value="UniProtKB-UniRule"/>
</dbReference>
<dbReference type="CDD" id="cd07095">
    <property type="entry name" value="ALDH_SGSD_AstD"/>
    <property type="match status" value="1"/>
</dbReference>
<dbReference type="FunFam" id="3.40.309.10:FF:000013">
    <property type="entry name" value="N-succinylglutamate 5-semialdehyde dehydrogenase"/>
    <property type="match status" value="1"/>
</dbReference>
<dbReference type="FunFam" id="3.40.605.10:FF:000010">
    <property type="entry name" value="N-succinylglutamate 5-semialdehyde dehydrogenase"/>
    <property type="match status" value="1"/>
</dbReference>
<dbReference type="Gene3D" id="3.40.605.10">
    <property type="entry name" value="Aldehyde Dehydrogenase, Chain A, domain 1"/>
    <property type="match status" value="1"/>
</dbReference>
<dbReference type="Gene3D" id="3.40.309.10">
    <property type="entry name" value="Aldehyde Dehydrogenase, Chain A, domain 2"/>
    <property type="match status" value="1"/>
</dbReference>
<dbReference type="HAMAP" id="MF_01174">
    <property type="entry name" value="Aldedh_AstD"/>
    <property type="match status" value="1"/>
</dbReference>
<dbReference type="InterPro" id="IPR016161">
    <property type="entry name" value="Ald_DH/histidinol_DH"/>
</dbReference>
<dbReference type="InterPro" id="IPR016163">
    <property type="entry name" value="Ald_DH_C"/>
</dbReference>
<dbReference type="InterPro" id="IPR016160">
    <property type="entry name" value="Ald_DH_CS_CYS"/>
</dbReference>
<dbReference type="InterPro" id="IPR029510">
    <property type="entry name" value="Ald_DH_CS_GLU"/>
</dbReference>
<dbReference type="InterPro" id="IPR016162">
    <property type="entry name" value="Ald_DH_N"/>
</dbReference>
<dbReference type="InterPro" id="IPR015590">
    <property type="entry name" value="Aldehyde_DH_dom"/>
</dbReference>
<dbReference type="InterPro" id="IPR017649">
    <property type="entry name" value="SuccinylGlu_semiald_DH_AstD"/>
</dbReference>
<dbReference type="NCBIfam" id="TIGR03240">
    <property type="entry name" value="arg_catab_astD"/>
    <property type="match status" value="1"/>
</dbReference>
<dbReference type="NCBIfam" id="NF006992">
    <property type="entry name" value="PRK09457.1"/>
    <property type="match status" value="1"/>
</dbReference>
<dbReference type="PANTHER" id="PTHR11699">
    <property type="entry name" value="ALDEHYDE DEHYDROGENASE-RELATED"/>
    <property type="match status" value="1"/>
</dbReference>
<dbReference type="Pfam" id="PF00171">
    <property type="entry name" value="Aldedh"/>
    <property type="match status" value="1"/>
</dbReference>
<dbReference type="SUPFAM" id="SSF53720">
    <property type="entry name" value="ALDH-like"/>
    <property type="match status" value="1"/>
</dbReference>
<dbReference type="PROSITE" id="PS00070">
    <property type="entry name" value="ALDEHYDE_DEHYDR_CYS"/>
    <property type="match status" value="1"/>
</dbReference>
<dbReference type="PROSITE" id="PS00687">
    <property type="entry name" value="ALDEHYDE_DEHYDR_GLU"/>
    <property type="match status" value="1"/>
</dbReference>
<evidence type="ECO:0000255" key="1">
    <source>
        <dbReference type="HAMAP-Rule" id="MF_01174"/>
    </source>
</evidence>
<accession>A8GFQ3</accession>
<keyword id="KW-0056">Arginine metabolism</keyword>
<keyword id="KW-0520">NAD</keyword>
<keyword id="KW-0560">Oxidoreductase</keyword>
<sequence>MSHPALFINGAWQQGRGAEFSKTDPVDNQPLWQANAADGSDVAAACEAARAAFPAWARTPFEQREQLVKRFAALLEEHKSHLAATISRETSKPRWETLTEVQAMIGKVAISLQAYQVRTGVSQTAMADGASVLRHRPHGVLAVFGPYNFPGHLPNGHIVPALLAGNTVVFKPSELTPQTAEETLKLWQQAGLPDGVINMVQGGRETGEALAASTDIDGLLFTGSAGTGYHLHRQLAGQPEKILALEMGGNNALIVDQIEDCDAAVNLAIQSAFISAGQRCTCSRRILVKRGSEGDAFIERLVQVASALRIGRWDAEPQPFMGGVISSAAAEKMLAAQHHLLSLGGKALLTMQRLESGSALLSPGIIDVTGVRDVPDEEYFGPLTTIIRYNDFDEAVRIANQTRYGLSVGLVSPQRERFDHLLLEARAGIVNWNKPLTGASSAAPFGGVGASGNHRPSAYYAADYCAWPMASLESESLTLPASLSPGLSFN</sequence>
<protein>
    <recommendedName>
        <fullName evidence="1">N-succinylglutamate 5-semialdehyde dehydrogenase</fullName>
        <ecNumber evidence="1">1.2.1.71</ecNumber>
    </recommendedName>
    <alternativeName>
        <fullName evidence="1">Succinylglutamic semialdehyde dehydrogenase</fullName>
        <shortName evidence="1">SGSD</shortName>
    </alternativeName>
</protein>
<name>ASTD_SERP5</name>
<comment type="function">
    <text evidence="1">Catalyzes the NAD-dependent reduction of succinylglutamate semialdehyde into succinylglutamate.</text>
</comment>
<comment type="catalytic activity">
    <reaction evidence="1">
        <text>N-succinyl-L-glutamate 5-semialdehyde + NAD(+) + H2O = N-succinyl-L-glutamate + NADH + 2 H(+)</text>
        <dbReference type="Rhea" id="RHEA:10812"/>
        <dbReference type="ChEBI" id="CHEBI:15377"/>
        <dbReference type="ChEBI" id="CHEBI:15378"/>
        <dbReference type="ChEBI" id="CHEBI:57540"/>
        <dbReference type="ChEBI" id="CHEBI:57945"/>
        <dbReference type="ChEBI" id="CHEBI:58520"/>
        <dbReference type="ChEBI" id="CHEBI:58763"/>
        <dbReference type="EC" id="1.2.1.71"/>
    </reaction>
</comment>
<comment type="pathway">
    <text evidence="1">Amino-acid degradation; L-arginine degradation via AST pathway; L-glutamate and succinate from L-arginine: step 4/5.</text>
</comment>
<comment type="similarity">
    <text evidence="1">Belongs to the aldehyde dehydrogenase family. AstD subfamily.</text>
</comment>
<proteinExistence type="inferred from homology"/>